<reference key="1">
    <citation type="submission" date="2007-05" db="EMBL/GenBank/DDBJ databases">
        <title>Complete sequence of Dehalococcoides sp. BAV1.</title>
        <authorList>
            <consortium name="US DOE Joint Genome Institute"/>
            <person name="Copeland A."/>
            <person name="Lucas S."/>
            <person name="Lapidus A."/>
            <person name="Barry K."/>
            <person name="Detter J.C."/>
            <person name="Glavina del Rio T."/>
            <person name="Hammon N."/>
            <person name="Israni S."/>
            <person name="Pitluck S."/>
            <person name="Lowry S."/>
            <person name="Clum A."/>
            <person name="Schmutz J."/>
            <person name="Larimer F."/>
            <person name="Land M."/>
            <person name="Hauser L."/>
            <person name="Kyrpides N."/>
            <person name="Kim E."/>
            <person name="Ritalahti K.M."/>
            <person name="Loeffler F."/>
            <person name="Richardson P."/>
        </authorList>
    </citation>
    <scope>NUCLEOTIDE SEQUENCE [LARGE SCALE GENOMIC DNA]</scope>
    <source>
        <strain>ATCC BAA-2100 / JCM 16839 / KCTC 5957 / BAV1</strain>
    </source>
</reference>
<gene>
    <name evidence="1" type="primary">pdxT</name>
    <name type="ordered locus">DehaBAV1_0573</name>
</gene>
<comment type="function">
    <text evidence="1">Catalyzes the hydrolysis of glutamine to glutamate and ammonia as part of the biosynthesis of pyridoxal 5'-phosphate. The resulting ammonia molecule is channeled to the active site of PdxS.</text>
</comment>
<comment type="catalytic activity">
    <reaction evidence="1">
        <text>aldehydo-D-ribose 5-phosphate + D-glyceraldehyde 3-phosphate + L-glutamine = pyridoxal 5'-phosphate + L-glutamate + phosphate + 3 H2O + H(+)</text>
        <dbReference type="Rhea" id="RHEA:31507"/>
        <dbReference type="ChEBI" id="CHEBI:15377"/>
        <dbReference type="ChEBI" id="CHEBI:15378"/>
        <dbReference type="ChEBI" id="CHEBI:29985"/>
        <dbReference type="ChEBI" id="CHEBI:43474"/>
        <dbReference type="ChEBI" id="CHEBI:58273"/>
        <dbReference type="ChEBI" id="CHEBI:58359"/>
        <dbReference type="ChEBI" id="CHEBI:59776"/>
        <dbReference type="ChEBI" id="CHEBI:597326"/>
        <dbReference type="EC" id="4.3.3.6"/>
    </reaction>
</comment>
<comment type="catalytic activity">
    <reaction evidence="1">
        <text>L-glutamine + H2O = L-glutamate + NH4(+)</text>
        <dbReference type="Rhea" id="RHEA:15889"/>
        <dbReference type="ChEBI" id="CHEBI:15377"/>
        <dbReference type="ChEBI" id="CHEBI:28938"/>
        <dbReference type="ChEBI" id="CHEBI:29985"/>
        <dbReference type="ChEBI" id="CHEBI:58359"/>
        <dbReference type="EC" id="3.5.1.2"/>
    </reaction>
</comment>
<comment type="pathway">
    <text evidence="1">Cofactor biosynthesis; pyridoxal 5'-phosphate biosynthesis.</text>
</comment>
<comment type="subunit">
    <text evidence="1">In the presence of PdxS, forms a dodecamer of heterodimers. Only shows activity in the heterodimer.</text>
</comment>
<comment type="similarity">
    <text evidence="1">Belongs to the glutaminase PdxT/SNO family.</text>
</comment>
<feature type="chain" id="PRO_1000088049" description="Pyridoxal 5'-phosphate synthase subunit PdxT">
    <location>
        <begin position="1"/>
        <end position="195"/>
    </location>
</feature>
<feature type="active site" description="Nucleophile" evidence="1">
    <location>
        <position position="78"/>
    </location>
</feature>
<feature type="active site" description="Charge relay system" evidence="1">
    <location>
        <position position="173"/>
    </location>
</feature>
<feature type="active site" description="Charge relay system" evidence="1">
    <location>
        <position position="175"/>
    </location>
</feature>
<feature type="binding site" evidence="1">
    <location>
        <begin position="46"/>
        <end position="48"/>
    </location>
    <ligand>
        <name>L-glutamine</name>
        <dbReference type="ChEBI" id="CHEBI:58359"/>
    </ligand>
</feature>
<feature type="binding site" evidence="1">
    <location>
        <position position="107"/>
    </location>
    <ligand>
        <name>L-glutamine</name>
        <dbReference type="ChEBI" id="CHEBI:58359"/>
    </ligand>
</feature>
<feature type="binding site" evidence="1">
    <location>
        <begin position="136"/>
        <end position="137"/>
    </location>
    <ligand>
        <name>L-glutamine</name>
        <dbReference type="ChEBI" id="CHEBI:58359"/>
    </ligand>
</feature>
<name>PDXT_DEHMB</name>
<accession>A5FRL6</accession>
<proteinExistence type="inferred from homology"/>
<evidence type="ECO:0000255" key="1">
    <source>
        <dbReference type="HAMAP-Rule" id="MF_01615"/>
    </source>
</evidence>
<protein>
    <recommendedName>
        <fullName evidence="1">Pyridoxal 5'-phosphate synthase subunit PdxT</fullName>
        <ecNumber evidence="1">4.3.3.6</ecNumber>
    </recommendedName>
    <alternativeName>
        <fullName evidence="1">Pdx2</fullName>
    </alternativeName>
    <alternativeName>
        <fullName evidence="1">Pyridoxal 5'-phosphate synthase glutaminase subunit</fullName>
        <ecNumber evidence="1">3.5.1.2</ecNumber>
    </alternativeName>
</protein>
<sequence>MKIGVLALQGAFREHLNMLGTLGAEAVEVRKAEELPELSGLIIPGGESTTITKLLDIFGMAEPIKALAKKGMPIWGTCAGMICLAKELPGDISGVKPLGLMDITVRRNAFGRQVNSFEAMLKVKGLDKADFPAVFIRAPLVEKTGKGVEILSKLPDGTIVAVRENNLLAISFHPELSGDNRFHRYFVQMAKTYKA</sequence>
<dbReference type="EC" id="4.3.3.6" evidence="1"/>
<dbReference type="EC" id="3.5.1.2" evidence="1"/>
<dbReference type="EMBL" id="CP000688">
    <property type="protein sequence ID" value="ABQ17158.1"/>
    <property type="molecule type" value="Genomic_DNA"/>
</dbReference>
<dbReference type="SMR" id="A5FRL6"/>
<dbReference type="KEGG" id="deb:DehaBAV1_0573"/>
<dbReference type="PATRIC" id="fig|216389.18.peg.619"/>
<dbReference type="HOGENOM" id="CLU_069674_2_0_0"/>
<dbReference type="UniPathway" id="UPA00245"/>
<dbReference type="GO" id="GO:0005829">
    <property type="term" value="C:cytosol"/>
    <property type="evidence" value="ECO:0007669"/>
    <property type="project" value="TreeGrafter"/>
</dbReference>
<dbReference type="GO" id="GO:1903600">
    <property type="term" value="C:glutaminase complex"/>
    <property type="evidence" value="ECO:0007669"/>
    <property type="project" value="TreeGrafter"/>
</dbReference>
<dbReference type="GO" id="GO:0004359">
    <property type="term" value="F:glutaminase activity"/>
    <property type="evidence" value="ECO:0007669"/>
    <property type="project" value="UniProtKB-UniRule"/>
</dbReference>
<dbReference type="GO" id="GO:0036381">
    <property type="term" value="F:pyridoxal 5'-phosphate synthase (glutamine hydrolysing) activity"/>
    <property type="evidence" value="ECO:0007669"/>
    <property type="project" value="UniProtKB-UniRule"/>
</dbReference>
<dbReference type="GO" id="GO:0006543">
    <property type="term" value="P:glutamine catabolic process"/>
    <property type="evidence" value="ECO:0007669"/>
    <property type="project" value="UniProtKB-UniRule"/>
</dbReference>
<dbReference type="GO" id="GO:0042823">
    <property type="term" value="P:pyridoxal phosphate biosynthetic process"/>
    <property type="evidence" value="ECO:0007669"/>
    <property type="project" value="UniProtKB-UniRule"/>
</dbReference>
<dbReference type="GO" id="GO:0008614">
    <property type="term" value="P:pyridoxine metabolic process"/>
    <property type="evidence" value="ECO:0007669"/>
    <property type="project" value="TreeGrafter"/>
</dbReference>
<dbReference type="CDD" id="cd01749">
    <property type="entry name" value="GATase1_PB"/>
    <property type="match status" value="1"/>
</dbReference>
<dbReference type="FunFam" id="3.40.50.880:FF:000010">
    <property type="entry name" value="uncharacterized protein LOC100176842 isoform X2"/>
    <property type="match status" value="1"/>
</dbReference>
<dbReference type="Gene3D" id="3.40.50.880">
    <property type="match status" value="1"/>
</dbReference>
<dbReference type="HAMAP" id="MF_01615">
    <property type="entry name" value="PdxT"/>
    <property type="match status" value="1"/>
</dbReference>
<dbReference type="InterPro" id="IPR029062">
    <property type="entry name" value="Class_I_gatase-like"/>
</dbReference>
<dbReference type="InterPro" id="IPR002161">
    <property type="entry name" value="PdxT/SNO"/>
</dbReference>
<dbReference type="InterPro" id="IPR021196">
    <property type="entry name" value="PdxT/SNO_CS"/>
</dbReference>
<dbReference type="NCBIfam" id="TIGR03800">
    <property type="entry name" value="PLP_synth_Pdx2"/>
    <property type="match status" value="1"/>
</dbReference>
<dbReference type="PANTHER" id="PTHR31559">
    <property type="entry name" value="PYRIDOXAL 5'-PHOSPHATE SYNTHASE SUBUNIT SNO"/>
    <property type="match status" value="1"/>
</dbReference>
<dbReference type="PANTHER" id="PTHR31559:SF0">
    <property type="entry name" value="PYRIDOXAL 5'-PHOSPHATE SYNTHASE SUBUNIT SNO1-RELATED"/>
    <property type="match status" value="1"/>
</dbReference>
<dbReference type="Pfam" id="PF01174">
    <property type="entry name" value="SNO"/>
    <property type="match status" value="1"/>
</dbReference>
<dbReference type="PIRSF" id="PIRSF005639">
    <property type="entry name" value="Glut_amidoT_SNO"/>
    <property type="match status" value="1"/>
</dbReference>
<dbReference type="SUPFAM" id="SSF52317">
    <property type="entry name" value="Class I glutamine amidotransferase-like"/>
    <property type="match status" value="1"/>
</dbReference>
<dbReference type="PROSITE" id="PS01236">
    <property type="entry name" value="PDXT_SNO_1"/>
    <property type="match status" value="1"/>
</dbReference>
<dbReference type="PROSITE" id="PS51130">
    <property type="entry name" value="PDXT_SNO_2"/>
    <property type="match status" value="1"/>
</dbReference>
<keyword id="KW-0315">Glutamine amidotransferase</keyword>
<keyword id="KW-0378">Hydrolase</keyword>
<keyword id="KW-0456">Lyase</keyword>
<keyword id="KW-0663">Pyridoxal phosphate</keyword>
<organism>
    <name type="scientific">Dehalococcoides mccartyi (strain ATCC BAA-2100 / JCM 16839 / KCTC 5957 / BAV1)</name>
    <dbReference type="NCBI Taxonomy" id="216389"/>
    <lineage>
        <taxon>Bacteria</taxon>
        <taxon>Bacillati</taxon>
        <taxon>Chloroflexota</taxon>
        <taxon>Dehalococcoidia</taxon>
        <taxon>Dehalococcoidales</taxon>
        <taxon>Dehalococcoidaceae</taxon>
        <taxon>Dehalococcoides</taxon>
    </lineage>
</organism>